<proteinExistence type="inferred from homology"/>
<sequence>MIFIDACFKKETPYTPIWMMRQAGRYLSEYQESRKKAGSFLELCKNSDLATEVTLQPVEILGVDAAILFSDILVVPLEMGLDLEFIPKKGPHFLETITDLKSVDSLKVGAYKRLNYVYDTISQTRQKLSKDKALIGFCGSPWTLATYMIESEGSKSYAKSKKMLYSEPEVLHTLLEKLSAELIEYLSLQIQAGVNAVMIFDSWANALEKEAYLKFSWDYLKKISKELKKRYARIPVILFPKGVGAYLDSIDGEFDVFGVDWGTPLEMAKKILGDKYVLQGNLEPTRLYDKNALEEGVEKILKIMGNKGHIFNLGHGMLPDLPRENAKYLVQLVHNKTKH</sequence>
<organism>
    <name type="scientific">Helicobacter acinonychis (strain Sheeba)</name>
    <dbReference type="NCBI Taxonomy" id="382638"/>
    <lineage>
        <taxon>Bacteria</taxon>
        <taxon>Pseudomonadati</taxon>
        <taxon>Campylobacterota</taxon>
        <taxon>Epsilonproteobacteria</taxon>
        <taxon>Campylobacterales</taxon>
        <taxon>Helicobacteraceae</taxon>
        <taxon>Helicobacter</taxon>
    </lineage>
</organism>
<dbReference type="EC" id="4.1.1.37" evidence="1"/>
<dbReference type="EMBL" id="AM260522">
    <property type="protein sequence ID" value="CAK00131.1"/>
    <property type="molecule type" value="Genomic_DNA"/>
</dbReference>
<dbReference type="RefSeq" id="WP_011578221.1">
    <property type="nucleotide sequence ID" value="NC_008229.1"/>
</dbReference>
<dbReference type="SMR" id="Q17W45"/>
<dbReference type="STRING" id="382638.Hac_1398"/>
<dbReference type="GeneID" id="31758699"/>
<dbReference type="KEGG" id="hac:Hac_1398"/>
<dbReference type="eggNOG" id="COG0407">
    <property type="taxonomic scope" value="Bacteria"/>
</dbReference>
<dbReference type="HOGENOM" id="CLU_040933_0_0_7"/>
<dbReference type="BioCyc" id="HACI382638:HAC_RS05970-MONOMER"/>
<dbReference type="UniPathway" id="UPA00251">
    <property type="reaction ID" value="UER00321"/>
</dbReference>
<dbReference type="Proteomes" id="UP000000775">
    <property type="component" value="Chromosome"/>
</dbReference>
<dbReference type="GO" id="GO:0005829">
    <property type="term" value="C:cytosol"/>
    <property type="evidence" value="ECO:0007669"/>
    <property type="project" value="TreeGrafter"/>
</dbReference>
<dbReference type="GO" id="GO:0004853">
    <property type="term" value="F:uroporphyrinogen decarboxylase activity"/>
    <property type="evidence" value="ECO:0007669"/>
    <property type="project" value="UniProtKB-UniRule"/>
</dbReference>
<dbReference type="GO" id="GO:0019353">
    <property type="term" value="P:protoporphyrinogen IX biosynthetic process from glutamate"/>
    <property type="evidence" value="ECO:0007669"/>
    <property type="project" value="TreeGrafter"/>
</dbReference>
<dbReference type="CDD" id="cd00717">
    <property type="entry name" value="URO-D"/>
    <property type="match status" value="1"/>
</dbReference>
<dbReference type="FunFam" id="3.20.20.210:FF:000007">
    <property type="entry name" value="Uroporphyrinogen decarboxylase"/>
    <property type="match status" value="1"/>
</dbReference>
<dbReference type="Gene3D" id="3.20.20.210">
    <property type="match status" value="1"/>
</dbReference>
<dbReference type="HAMAP" id="MF_00218">
    <property type="entry name" value="URO_D"/>
    <property type="match status" value="1"/>
</dbReference>
<dbReference type="InterPro" id="IPR038071">
    <property type="entry name" value="UROD/MetE-like_sf"/>
</dbReference>
<dbReference type="InterPro" id="IPR006361">
    <property type="entry name" value="Uroporphyrinogen_deCO2ase_HemE"/>
</dbReference>
<dbReference type="InterPro" id="IPR000257">
    <property type="entry name" value="Uroporphyrinogen_deCOase"/>
</dbReference>
<dbReference type="NCBIfam" id="TIGR01464">
    <property type="entry name" value="hemE"/>
    <property type="match status" value="1"/>
</dbReference>
<dbReference type="PANTHER" id="PTHR21091">
    <property type="entry name" value="METHYLTETRAHYDROFOLATE:HOMOCYSTEINE METHYLTRANSFERASE RELATED"/>
    <property type="match status" value="1"/>
</dbReference>
<dbReference type="PANTHER" id="PTHR21091:SF169">
    <property type="entry name" value="UROPORPHYRINOGEN DECARBOXYLASE"/>
    <property type="match status" value="1"/>
</dbReference>
<dbReference type="Pfam" id="PF01208">
    <property type="entry name" value="URO-D"/>
    <property type="match status" value="1"/>
</dbReference>
<dbReference type="SUPFAM" id="SSF51726">
    <property type="entry name" value="UROD/MetE-like"/>
    <property type="match status" value="1"/>
</dbReference>
<dbReference type="PROSITE" id="PS00906">
    <property type="entry name" value="UROD_1"/>
    <property type="match status" value="1"/>
</dbReference>
<comment type="function">
    <text evidence="1">Catalyzes the decarboxylation of four acetate groups of uroporphyrinogen-III to yield coproporphyrinogen-III.</text>
</comment>
<comment type="catalytic activity">
    <reaction evidence="1">
        <text>uroporphyrinogen III + 4 H(+) = coproporphyrinogen III + 4 CO2</text>
        <dbReference type="Rhea" id="RHEA:19865"/>
        <dbReference type="ChEBI" id="CHEBI:15378"/>
        <dbReference type="ChEBI" id="CHEBI:16526"/>
        <dbReference type="ChEBI" id="CHEBI:57308"/>
        <dbReference type="ChEBI" id="CHEBI:57309"/>
        <dbReference type="EC" id="4.1.1.37"/>
    </reaction>
</comment>
<comment type="pathway">
    <text evidence="1">Porphyrin-containing compound metabolism; protoporphyrin-IX biosynthesis; coproporphyrinogen-III from 5-aminolevulinate: step 4/4.</text>
</comment>
<comment type="subunit">
    <text evidence="1">Homodimer.</text>
</comment>
<comment type="subcellular location">
    <subcellularLocation>
        <location evidence="1">Cytoplasm</location>
    </subcellularLocation>
</comment>
<comment type="similarity">
    <text evidence="1">Belongs to the uroporphyrinogen decarboxylase family.</text>
</comment>
<feature type="chain" id="PRO_1000023912" description="Uroporphyrinogen decarboxylase">
    <location>
        <begin position="1"/>
        <end position="339"/>
    </location>
</feature>
<feature type="binding site" evidence="1">
    <location>
        <begin position="21"/>
        <end position="25"/>
    </location>
    <ligand>
        <name>substrate</name>
    </ligand>
</feature>
<feature type="binding site" evidence="1">
    <location>
        <position position="71"/>
    </location>
    <ligand>
        <name>substrate</name>
    </ligand>
</feature>
<feature type="binding site" evidence="1">
    <location>
        <position position="147"/>
    </location>
    <ligand>
        <name>substrate</name>
    </ligand>
</feature>
<feature type="binding site" evidence="1">
    <location>
        <position position="202"/>
    </location>
    <ligand>
        <name>substrate</name>
    </ligand>
</feature>
<feature type="binding site" evidence="1">
    <location>
        <position position="315"/>
    </location>
    <ligand>
        <name>substrate</name>
    </ligand>
</feature>
<feature type="site" description="Transition state stabilizer" evidence="1">
    <location>
        <position position="71"/>
    </location>
</feature>
<name>DCUP_HELAH</name>
<protein>
    <recommendedName>
        <fullName evidence="1">Uroporphyrinogen decarboxylase</fullName>
        <shortName evidence="1">UPD</shortName>
        <shortName evidence="1">URO-D</shortName>
        <ecNumber evidence="1">4.1.1.37</ecNumber>
    </recommendedName>
</protein>
<gene>
    <name evidence="1" type="primary">hemE</name>
    <name type="ordered locus">Hac_1398</name>
</gene>
<accession>Q17W45</accession>
<reference key="1">
    <citation type="journal article" date="2006" name="PLoS Genet.">
        <title>Who ate whom? Adaptive Helicobacter genomic changes that accompanied a host jump from early humans to large felines.</title>
        <authorList>
            <person name="Eppinger M."/>
            <person name="Baar C."/>
            <person name="Linz B."/>
            <person name="Raddatz G."/>
            <person name="Lanz C."/>
            <person name="Keller H."/>
            <person name="Morelli G."/>
            <person name="Gressmann H."/>
            <person name="Achtman M."/>
            <person name="Schuster S.C."/>
        </authorList>
    </citation>
    <scope>NUCLEOTIDE SEQUENCE [LARGE SCALE GENOMIC DNA]</scope>
    <source>
        <strain>Sheeba</strain>
    </source>
</reference>
<evidence type="ECO:0000255" key="1">
    <source>
        <dbReference type="HAMAP-Rule" id="MF_00218"/>
    </source>
</evidence>
<keyword id="KW-0963">Cytoplasm</keyword>
<keyword id="KW-0210">Decarboxylase</keyword>
<keyword id="KW-0456">Lyase</keyword>
<keyword id="KW-0627">Porphyrin biosynthesis</keyword>